<reference key="1">
    <citation type="journal article" date="2001" name="DNA Res.">
        <title>Complete genome sequence of an aerobic thermoacidophilic Crenarchaeon, Sulfolobus tokodaii strain7.</title>
        <authorList>
            <person name="Kawarabayasi Y."/>
            <person name="Hino Y."/>
            <person name="Horikawa H."/>
            <person name="Jin-no K."/>
            <person name="Takahashi M."/>
            <person name="Sekine M."/>
            <person name="Baba S."/>
            <person name="Ankai A."/>
            <person name="Kosugi H."/>
            <person name="Hosoyama A."/>
            <person name="Fukui S."/>
            <person name="Nagai Y."/>
            <person name="Nishijima K."/>
            <person name="Otsuka R."/>
            <person name="Nakazawa H."/>
            <person name="Takamiya M."/>
            <person name="Kato Y."/>
            <person name="Yoshizawa T."/>
            <person name="Tanaka T."/>
            <person name="Kudoh Y."/>
            <person name="Yamazaki J."/>
            <person name="Kushida N."/>
            <person name="Oguchi A."/>
            <person name="Aoki K."/>
            <person name="Masuda S."/>
            <person name="Yanagii M."/>
            <person name="Nishimura M."/>
            <person name="Yamagishi A."/>
            <person name="Oshima T."/>
            <person name="Kikuchi H."/>
        </authorList>
    </citation>
    <scope>NUCLEOTIDE SEQUENCE [LARGE SCALE GENOMIC DNA]</scope>
    <source>
        <strain>DSM 16993 / JCM 10545 / NBRC 100140 / 7</strain>
    </source>
</reference>
<name>RFCS_SULTO</name>
<gene>
    <name evidence="1" type="primary">rfcS</name>
    <name type="ordered locus">STK_04750</name>
</gene>
<feature type="chain" id="PRO_0000135985" description="Replication factor C small subunit">
    <location>
        <begin position="1"/>
        <end position="327"/>
    </location>
</feature>
<feature type="binding site" evidence="1">
    <location>
        <begin position="47"/>
        <end position="54"/>
    </location>
    <ligand>
        <name>ATP</name>
        <dbReference type="ChEBI" id="CHEBI:30616"/>
    </ligand>
</feature>
<sequence>MSLEEEILWAEKYRPRSLDDIVNQKDIVERLKRFVKDKNMPHLLFSGPPGTGKTTAALALVHDLYGDNYRQYFLELNASDERGIDVIRNKVKEFARTVAGGNVPFKVVLLDEADNMTADAQQALRRTMELYTETTRFILACNYLSKIIEPIQSRTALFRFYPLKKEDVVARLAYIAKNEKVEYDQKALETIYDITQGDMRKAINILQASSVYGKVTVEAVYKVLGLAQPKEIREMIMLALQGNFLKAREKLRELLVNYGLSGEDIIKQIHREVTGNEINIPDDLKVLLVDYIGEVEYRIMEGADDEIQLNALLAKLAVYGEKYLKGK</sequence>
<comment type="function">
    <text evidence="1">Part of the RFC clamp loader complex which loads the PCNA sliding clamp onto DNA.</text>
</comment>
<comment type="subunit">
    <text evidence="1">Heteromultimer composed of small subunits (RfcS) and large subunits (RfcL).</text>
</comment>
<comment type="similarity">
    <text evidence="1">Belongs to the activator 1 small subunits family. RfcS subfamily.</text>
</comment>
<proteinExistence type="inferred from homology"/>
<organism>
    <name type="scientific">Sulfurisphaera tokodaii (strain DSM 16993 / JCM 10545 / NBRC 100140 / 7)</name>
    <name type="common">Sulfolobus tokodaii</name>
    <dbReference type="NCBI Taxonomy" id="273063"/>
    <lineage>
        <taxon>Archaea</taxon>
        <taxon>Thermoproteota</taxon>
        <taxon>Thermoprotei</taxon>
        <taxon>Sulfolobales</taxon>
        <taxon>Sulfolobaceae</taxon>
        <taxon>Sulfurisphaera</taxon>
    </lineage>
</organism>
<evidence type="ECO:0000255" key="1">
    <source>
        <dbReference type="HAMAP-Rule" id="MF_01509"/>
    </source>
</evidence>
<dbReference type="EMBL" id="BA000023">
    <property type="protein sequence ID" value="BAK54297.1"/>
    <property type="molecule type" value="Genomic_DNA"/>
</dbReference>
<dbReference type="RefSeq" id="WP_010978451.1">
    <property type="nucleotide sequence ID" value="NC_003106.2"/>
</dbReference>
<dbReference type="SMR" id="Q975D3"/>
<dbReference type="STRING" id="273063.STK_04750"/>
<dbReference type="GeneID" id="1458417"/>
<dbReference type="KEGG" id="sto:STK_04750"/>
<dbReference type="PATRIC" id="fig|273063.9.peg.549"/>
<dbReference type="eggNOG" id="arCOG00469">
    <property type="taxonomic scope" value="Archaea"/>
</dbReference>
<dbReference type="OrthoDB" id="7928at2157"/>
<dbReference type="Proteomes" id="UP000001015">
    <property type="component" value="Chromosome"/>
</dbReference>
<dbReference type="GO" id="GO:0005663">
    <property type="term" value="C:DNA replication factor C complex"/>
    <property type="evidence" value="ECO:0007669"/>
    <property type="project" value="InterPro"/>
</dbReference>
<dbReference type="GO" id="GO:0005524">
    <property type="term" value="F:ATP binding"/>
    <property type="evidence" value="ECO:0007669"/>
    <property type="project" value="UniProtKB-UniRule"/>
</dbReference>
<dbReference type="GO" id="GO:0016887">
    <property type="term" value="F:ATP hydrolysis activity"/>
    <property type="evidence" value="ECO:0007669"/>
    <property type="project" value="InterPro"/>
</dbReference>
<dbReference type="GO" id="GO:0003677">
    <property type="term" value="F:DNA binding"/>
    <property type="evidence" value="ECO:0007669"/>
    <property type="project" value="InterPro"/>
</dbReference>
<dbReference type="GO" id="GO:0003689">
    <property type="term" value="F:DNA clamp loader activity"/>
    <property type="evidence" value="ECO:0007669"/>
    <property type="project" value="UniProtKB-UniRule"/>
</dbReference>
<dbReference type="GO" id="GO:0006281">
    <property type="term" value="P:DNA repair"/>
    <property type="evidence" value="ECO:0007669"/>
    <property type="project" value="TreeGrafter"/>
</dbReference>
<dbReference type="GO" id="GO:0006261">
    <property type="term" value="P:DNA-templated DNA replication"/>
    <property type="evidence" value="ECO:0007669"/>
    <property type="project" value="TreeGrafter"/>
</dbReference>
<dbReference type="CDD" id="cd00009">
    <property type="entry name" value="AAA"/>
    <property type="match status" value="1"/>
</dbReference>
<dbReference type="CDD" id="cd18140">
    <property type="entry name" value="HLD_clamp_RFC"/>
    <property type="match status" value="1"/>
</dbReference>
<dbReference type="FunFam" id="1.20.272.10:FF:000029">
    <property type="entry name" value="Replication factor C small subunit"/>
    <property type="match status" value="1"/>
</dbReference>
<dbReference type="FunFam" id="3.40.50.300:FF:000129">
    <property type="entry name" value="Replication factor C subunit 5"/>
    <property type="match status" value="1"/>
</dbReference>
<dbReference type="Gene3D" id="1.10.8.60">
    <property type="match status" value="1"/>
</dbReference>
<dbReference type="Gene3D" id="1.20.272.10">
    <property type="match status" value="1"/>
</dbReference>
<dbReference type="Gene3D" id="3.40.50.300">
    <property type="entry name" value="P-loop containing nucleotide triphosphate hydrolases"/>
    <property type="match status" value="1"/>
</dbReference>
<dbReference type="HAMAP" id="MF_01509">
    <property type="entry name" value="RfcS"/>
    <property type="match status" value="1"/>
</dbReference>
<dbReference type="InterPro" id="IPR003593">
    <property type="entry name" value="AAA+_ATPase"/>
</dbReference>
<dbReference type="InterPro" id="IPR003959">
    <property type="entry name" value="ATPase_AAA_core"/>
</dbReference>
<dbReference type="InterPro" id="IPR008921">
    <property type="entry name" value="DNA_pol3_clamp-load_cplx_C"/>
</dbReference>
<dbReference type="InterPro" id="IPR050238">
    <property type="entry name" value="DNA_Rep/Repair_Clamp_Loader"/>
</dbReference>
<dbReference type="InterPro" id="IPR027417">
    <property type="entry name" value="P-loop_NTPase"/>
</dbReference>
<dbReference type="InterPro" id="IPR023748">
    <property type="entry name" value="Rep_factor-C_ssu_arc"/>
</dbReference>
<dbReference type="InterPro" id="IPR013748">
    <property type="entry name" value="Rep_factorC_C"/>
</dbReference>
<dbReference type="InterPro" id="IPR047854">
    <property type="entry name" value="RFC_lid"/>
</dbReference>
<dbReference type="NCBIfam" id="NF001679">
    <property type="entry name" value="PRK00440.1"/>
    <property type="match status" value="1"/>
</dbReference>
<dbReference type="PANTHER" id="PTHR11669">
    <property type="entry name" value="REPLICATION FACTOR C / DNA POLYMERASE III GAMMA-TAU SUBUNIT"/>
    <property type="match status" value="1"/>
</dbReference>
<dbReference type="PANTHER" id="PTHR11669:SF20">
    <property type="entry name" value="REPLICATION FACTOR C SUBUNIT 4"/>
    <property type="match status" value="1"/>
</dbReference>
<dbReference type="Pfam" id="PF00004">
    <property type="entry name" value="AAA"/>
    <property type="match status" value="1"/>
</dbReference>
<dbReference type="Pfam" id="PF21960">
    <property type="entry name" value="RCF1-5-like_lid"/>
    <property type="match status" value="1"/>
</dbReference>
<dbReference type="Pfam" id="PF08542">
    <property type="entry name" value="Rep_fac_C"/>
    <property type="match status" value="1"/>
</dbReference>
<dbReference type="SMART" id="SM00382">
    <property type="entry name" value="AAA"/>
    <property type="match status" value="1"/>
</dbReference>
<dbReference type="SUPFAM" id="SSF52540">
    <property type="entry name" value="P-loop containing nucleoside triphosphate hydrolases"/>
    <property type="match status" value="1"/>
</dbReference>
<dbReference type="SUPFAM" id="SSF48019">
    <property type="entry name" value="post-AAA+ oligomerization domain-like"/>
    <property type="match status" value="1"/>
</dbReference>
<keyword id="KW-0067">ATP-binding</keyword>
<keyword id="KW-0235">DNA replication</keyword>
<keyword id="KW-0547">Nucleotide-binding</keyword>
<keyword id="KW-1185">Reference proteome</keyword>
<accession>Q975D3</accession>
<accession>F9VN00</accession>
<protein>
    <recommendedName>
        <fullName evidence="1">Replication factor C small subunit</fullName>
        <shortName evidence="1">RFC small subunit</shortName>
    </recommendedName>
    <alternativeName>
        <fullName evidence="1">Clamp loader small subunit</fullName>
    </alternativeName>
</protein>